<accession>Q9JVB6</accession>
<accession>A1IQV6</accession>
<evidence type="ECO:0000250" key="1"/>
<evidence type="ECO:0000250" key="2">
    <source>
        <dbReference type="UniProtKB" id="P33643"/>
    </source>
</evidence>
<evidence type="ECO:0000255" key="3">
    <source>
        <dbReference type="PROSITE-ProRule" id="PRU00182"/>
    </source>
</evidence>
<evidence type="ECO:0000256" key="4">
    <source>
        <dbReference type="SAM" id="MobiDB-lite"/>
    </source>
</evidence>
<evidence type="ECO:0000305" key="5"/>
<name>RLUD_NEIMA</name>
<sequence>MQNTSFDNESDYSDDSDFASASETENRIGLTVPLELAGGRLDAVLAKLLPDYSRSRLTLWIKEGAVIVNDKPSQPKDKMIGGEQIRVTVRPSEENLAFVPEPMALDIVYEDDTVIVVNKPAGLVVHPAAGNWTGTLLNGLLAHCPELSQIPRAGIVHRLDKETSGLMVVAKTLPAQNSLVWQLQERTVKRIYRAVANGIVPFDGKIETQIGRDPHNRLKMAVVKFGGKPAVTHVKVLERYLAHSYIECSLETGRTHQIRVHMREANHPLAGDPVYGNPRHPCGDTVKEAVKSLGARQALHAYRLSFTHPESGETVSFEAPIPDDIYHLLSVLRLEAGLDSSLSNEEEWQDKFGADDDDDWNEDDYDVEVVYVRE</sequence>
<gene>
    <name type="primary">rluD</name>
    <name type="ordered locus">NMA0908</name>
</gene>
<protein>
    <recommendedName>
        <fullName evidence="2">Ribosomal large subunit pseudouridine synthase D</fullName>
        <ecNumber evidence="2">5.4.99.23</ecNumber>
    </recommendedName>
    <alternativeName>
        <fullName>23S rRNA pseudouridine(1911/1915/1917) synthase</fullName>
    </alternativeName>
    <alternativeName>
        <fullName>rRNA pseudouridylate synthase D</fullName>
    </alternativeName>
    <alternativeName>
        <fullName>rRNA-uridine isomerase D</fullName>
    </alternativeName>
</protein>
<keyword id="KW-0963">Cytoplasm</keyword>
<keyword id="KW-0413">Isomerase</keyword>
<keyword id="KW-0694">RNA-binding</keyword>
<keyword id="KW-0698">rRNA processing</keyword>
<feature type="chain" id="PRO_0000162693" description="Ribosomal large subunit pseudouridine synthase D">
    <location>
        <begin position="1"/>
        <end position="374"/>
    </location>
</feature>
<feature type="domain" description="S4 RNA-binding" evidence="3">
    <location>
        <begin position="39"/>
        <end position="112"/>
    </location>
</feature>
<feature type="region of interest" description="Disordered" evidence="4">
    <location>
        <begin position="1"/>
        <end position="20"/>
    </location>
</feature>
<feature type="compositionally biased region" description="Acidic residues" evidence="4">
    <location>
        <begin position="8"/>
        <end position="17"/>
    </location>
</feature>
<feature type="active site" evidence="1">
    <location>
        <position position="160"/>
    </location>
</feature>
<reference key="1">
    <citation type="journal article" date="2000" name="Nature">
        <title>Complete DNA sequence of a serogroup A strain of Neisseria meningitidis Z2491.</title>
        <authorList>
            <person name="Parkhill J."/>
            <person name="Achtman M."/>
            <person name="James K.D."/>
            <person name="Bentley S.D."/>
            <person name="Churcher C.M."/>
            <person name="Klee S.R."/>
            <person name="Morelli G."/>
            <person name="Basham D."/>
            <person name="Brown D."/>
            <person name="Chillingworth T."/>
            <person name="Davies R.M."/>
            <person name="Davis P."/>
            <person name="Devlin K."/>
            <person name="Feltwell T."/>
            <person name="Hamlin N."/>
            <person name="Holroyd S."/>
            <person name="Jagels K."/>
            <person name="Leather S."/>
            <person name="Moule S."/>
            <person name="Mungall K.L."/>
            <person name="Quail M.A."/>
            <person name="Rajandream M.A."/>
            <person name="Rutherford K.M."/>
            <person name="Simmonds M."/>
            <person name="Skelton J."/>
            <person name="Whitehead S."/>
            <person name="Spratt B.G."/>
            <person name="Barrell B.G."/>
        </authorList>
    </citation>
    <scope>NUCLEOTIDE SEQUENCE [LARGE SCALE GENOMIC DNA]</scope>
    <source>
        <strain>DSM 15465 / Z2491</strain>
    </source>
</reference>
<organism>
    <name type="scientific">Neisseria meningitidis serogroup A / serotype 4A (strain DSM 15465 / Z2491)</name>
    <dbReference type="NCBI Taxonomy" id="122587"/>
    <lineage>
        <taxon>Bacteria</taxon>
        <taxon>Pseudomonadati</taxon>
        <taxon>Pseudomonadota</taxon>
        <taxon>Betaproteobacteria</taxon>
        <taxon>Neisseriales</taxon>
        <taxon>Neisseriaceae</taxon>
        <taxon>Neisseria</taxon>
    </lineage>
</organism>
<proteinExistence type="inferred from homology"/>
<dbReference type="EC" id="5.4.99.23" evidence="2"/>
<dbReference type="EMBL" id="AL157959">
    <property type="protein sequence ID" value="CAM08140.1"/>
    <property type="molecule type" value="Genomic_DNA"/>
</dbReference>
<dbReference type="PIR" id="D81937">
    <property type="entry name" value="D81937"/>
</dbReference>
<dbReference type="RefSeq" id="WP_002246859.1">
    <property type="nucleotide sequence ID" value="NC_003116.1"/>
</dbReference>
<dbReference type="SMR" id="Q9JVB6"/>
<dbReference type="EnsemblBacteria" id="CAM08140">
    <property type="protein sequence ID" value="CAM08140"/>
    <property type="gene ID" value="NMA0908"/>
</dbReference>
<dbReference type="KEGG" id="nma:NMA0908"/>
<dbReference type="HOGENOM" id="CLU_016902_4_0_4"/>
<dbReference type="Proteomes" id="UP000000626">
    <property type="component" value="Chromosome"/>
</dbReference>
<dbReference type="GO" id="GO:0005737">
    <property type="term" value="C:cytoplasm"/>
    <property type="evidence" value="ECO:0007669"/>
    <property type="project" value="UniProtKB-SubCell"/>
</dbReference>
<dbReference type="GO" id="GO:0160140">
    <property type="term" value="F:23S rRNA pseudouridine(1911/1915/1917) synthase activity"/>
    <property type="evidence" value="ECO:0007669"/>
    <property type="project" value="UniProtKB-EC"/>
</dbReference>
<dbReference type="GO" id="GO:0003723">
    <property type="term" value="F:RNA binding"/>
    <property type="evidence" value="ECO:0007669"/>
    <property type="project" value="UniProtKB-KW"/>
</dbReference>
<dbReference type="GO" id="GO:0000455">
    <property type="term" value="P:enzyme-directed rRNA pseudouridine synthesis"/>
    <property type="evidence" value="ECO:0007669"/>
    <property type="project" value="TreeGrafter"/>
</dbReference>
<dbReference type="CDD" id="cd02869">
    <property type="entry name" value="PseudoU_synth_RluA_like"/>
    <property type="match status" value="1"/>
</dbReference>
<dbReference type="CDD" id="cd00165">
    <property type="entry name" value="S4"/>
    <property type="match status" value="1"/>
</dbReference>
<dbReference type="FunFam" id="3.30.2350.10:FF:000006">
    <property type="entry name" value="Pseudouridine synthase"/>
    <property type="match status" value="1"/>
</dbReference>
<dbReference type="Gene3D" id="3.30.2350.10">
    <property type="entry name" value="Pseudouridine synthase"/>
    <property type="match status" value="1"/>
</dbReference>
<dbReference type="Gene3D" id="3.10.290.10">
    <property type="entry name" value="RNA-binding S4 domain"/>
    <property type="match status" value="1"/>
</dbReference>
<dbReference type="InterPro" id="IPR020103">
    <property type="entry name" value="PsdUridine_synth_cat_dom_sf"/>
</dbReference>
<dbReference type="InterPro" id="IPR006224">
    <property type="entry name" value="PsdUridine_synth_RluA-like_CS"/>
</dbReference>
<dbReference type="InterPro" id="IPR006225">
    <property type="entry name" value="PsdUridine_synth_RluC/D"/>
</dbReference>
<dbReference type="InterPro" id="IPR006145">
    <property type="entry name" value="PsdUridine_synth_RsuA/RluA"/>
</dbReference>
<dbReference type="InterPro" id="IPR050188">
    <property type="entry name" value="RluA_PseudoU_synthase"/>
</dbReference>
<dbReference type="InterPro" id="IPR002942">
    <property type="entry name" value="S4_RNA-bd"/>
</dbReference>
<dbReference type="InterPro" id="IPR036986">
    <property type="entry name" value="S4_RNA-bd_sf"/>
</dbReference>
<dbReference type="NCBIfam" id="NF008385">
    <property type="entry name" value="PRK11180.1"/>
    <property type="match status" value="1"/>
</dbReference>
<dbReference type="NCBIfam" id="TIGR00005">
    <property type="entry name" value="rluA_subfam"/>
    <property type="match status" value="1"/>
</dbReference>
<dbReference type="PANTHER" id="PTHR21600">
    <property type="entry name" value="MITOCHONDRIAL RNA PSEUDOURIDINE SYNTHASE"/>
    <property type="match status" value="1"/>
</dbReference>
<dbReference type="PANTHER" id="PTHR21600:SF44">
    <property type="entry name" value="RIBOSOMAL LARGE SUBUNIT PSEUDOURIDINE SYNTHASE D"/>
    <property type="match status" value="1"/>
</dbReference>
<dbReference type="Pfam" id="PF00849">
    <property type="entry name" value="PseudoU_synth_2"/>
    <property type="match status" value="1"/>
</dbReference>
<dbReference type="Pfam" id="PF01479">
    <property type="entry name" value="S4"/>
    <property type="match status" value="1"/>
</dbReference>
<dbReference type="SMART" id="SM00363">
    <property type="entry name" value="S4"/>
    <property type="match status" value="1"/>
</dbReference>
<dbReference type="SUPFAM" id="SSF55174">
    <property type="entry name" value="Alpha-L RNA-binding motif"/>
    <property type="match status" value="1"/>
</dbReference>
<dbReference type="SUPFAM" id="SSF55120">
    <property type="entry name" value="Pseudouridine synthase"/>
    <property type="match status" value="1"/>
</dbReference>
<dbReference type="PROSITE" id="PS01129">
    <property type="entry name" value="PSI_RLU"/>
    <property type="match status" value="1"/>
</dbReference>
<dbReference type="PROSITE" id="PS50889">
    <property type="entry name" value="S4"/>
    <property type="match status" value="1"/>
</dbReference>
<comment type="function">
    <text evidence="2">Responsible for synthesis of pseudouridine from uracil at positions 1911, 1915 and 1917 in 23S ribosomal RNA.</text>
</comment>
<comment type="catalytic activity">
    <reaction evidence="2">
        <text>uridine(1911/1915/1917) in 23S rRNA = pseudouridine(1911/1915/1917) in 23S rRNA</text>
        <dbReference type="Rhea" id="RHEA:42524"/>
        <dbReference type="Rhea" id="RHEA-COMP:10097"/>
        <dbReference type="Rhea" id="RHEA-COMP:10098"/>
        <dbReference type="ChEBI" id="CHEBI:65314"/>
        <dbReference type="ChEBI" id="CHEBI:65315"/>
        <dbReference type="EC" id="5.4.99.23"/>
    </reaction>
</comment>
<comment type="subcellular location">
    <subcellularLocation>
        <location evidence="2">Cytoplasm</location>
    </subcellularLocation>
    <text evidence="2">Associates with late stage pre-50S ribosomal subunits.</text>
</comment>
<comment type="similarity">
    <text evidence="5">Belongs to the pseudouridine synthase RluA family.</text>
</comment>